<protein>
    <recommendedName>
        <fullName evidence="1">ATP synthase epsilon chain</fullName>
    </recommendedName>
    <alternativeName>
        <fullName evidence="1">ATP synthase F1 sector epsilon subunit</fullName>
    </alternativeName>
    <alternativeName>
        <fullName evidence="1">F-ATPase epsilon subunit</fullName>
    </alternativeName>
</protein>
<dbReference type="EMBL" id="BX640435">
    <property type="protein sequence ID" value="CAE39413.1"/>
    <property type="molecule type" value="Genomic_DNA"/>
</dbReference>
<dbReference type="RefSeq" id="WP_003815341.1">
    <property type="nucleotide sequence ID" value="NC_002928.3"/>
</dbReference>
<dbReference type="SMR" id="Q7W3B1"/>
<dbReference type="KEGG" id="bpa:BPP4134"/>
<dbReference type="HOGENOM" id="CLU_084338_2_0_4"/>
<dbReference type="Proteomes" id="UP000001421">
    <property type="component" value="Chromosome"/>
</dbReference>
<dbReference type="GO" id="GO:0005886">
    <property type="term" value="C:plasma membrane"/>
    <property type="evidence" value="ECO:0007669"/>
    <property type="project" value="UniProtKB-SubCell"/>
</dbReference>
<dbReference type="GO" id="GO:0045259">
    <property type="term" value="C:proton-transporting ATP synthase complex"/>
    <property type="evidence" value="ECO:0007669"/>
    <property type="project" value="UniProtKB-KW"/>
</dbReference>
<dbReference type="GO" id="GO:0005524">
    <property type="term" value="F:ATP binding"/>
    <property type="evidence" value="ECO:0007669"/>
    <property type="project" value="UniProtKB-UniRule"/>
</dbReference>
<dbReference type="GO" id="GO:0046933">
    <property type="term" value="F:proton-transporting ATP synthase activity, rotational mechanism"/>
    <property type="evidence" value="ECO:0007669"/>
    <property type="project" value="UniProtKB-UniRule"/>
</dbReference>
<dbReference type="CDD" id="cd12152">
    <property type="entry name" value="F1-ATPase_delta"/>
    <property type="match status" value="1"/>
</dbReference>
<dbReference type="FunFam" id="2.60.15.10:FF:000001">
    <property type="entry name" value="ATP synthase epsilon chain"/>
    <property type="match status" value="1"/>
</dbReference>
<dbReference type="Gene3D" id="2.60.15.10">
    <property type="entry name" value="F0F1 ATP synthase delta/epsilon subunit, N-terminal"/>
    <property type="match status" value="1"/>
</dbReference>
<dbReference type="HAMAP" id="MF_00530">
    <property type="entry name" value="ATP_synth_epsil_bac"/>
    <property type="match status" value="1"/>
</dbReference>
<dbReference type="InterPro" id="IPR036794">
    <property type="entry name" value="ATP_F1_dsu/esu_C_sf"/>
</dbReference>
<dbReference type="InterPro" id="IPR001469">
    <property type="entry name" value="ATP_synth_F1_dsu/esu"/>
</dbReference>
<dbReference type="InterPro" id="IPR020546">
    <property type="entry name" value="ATP_synth_F1_dsu/esu_N"/>
</dbReference>
<dbReference type="InterPro" id="IPR036771">
    <property type="entry name" value="ATPsynth_dsu/esu_N"/>
</dbReference>
<dbReference type="NCBIfam" id="TIGR01216">
    <property type="entry name" value="ATP_synt_epsi"/>
    <property type="match status" value="1"/>
</dbReference>
<dbReference type="NCBIfam" id="NF001847">
    <property type="entry name" value="PRK00571.1-4"/>
    <property type="match status" value="1"/>
</dbReference>
<dbReference type="PANTHER" id="PTHR13822">
    <property type="entry name" value="ATP SYNTHASE DELTA/EPSILON CHAIN"/>
    <property type="match status" value="1"/>
</dbReference>
<dbReference type="PANTHER" id="PTHR13822:SF10">
    <property type="entry name" value="ATP SYNTHASE EPSILON CHAIN, CHLOROPLASTIC"/>
    <property type="match status" value="1"/>
</dbReference>
<dbReference type="Pfam" id="PF02823">
    <property type="entry name" value="ATP-synt_DE_N"/>
    <property type="match status" value="1"/>
</dbReference>
<dbReference type="SUPFAM" id="SSF46604">
    <property type="entry name" value="Epsilon subunit of F1F0-ATP synthase C-terminal domain"/>
    <property type="match status" value="1"/>
</dbReference>
<dbReference type="SUPFAM" id="SSF51344">
    <property type="entry name" value="Epsilon subunit of F1F0-ATP synthase N-terminal domain"/>
    <property type="match status" value="1"/>
</dbReference>
<sequence>MATLHVDVVSAEEAIFTGEAKFVVLPGEAGELGILPGHTPLISRIRPGTVKIVRADEGEENIFVAGGILEVQPGSVTVLADTAIRAADLDEARAVAAREKAEEALRNAKDKADIAVVEAELAMLAAQAVAARKLRQGRTH</sequence>
<reference key="1">
    <citation type="journal article" date="2003" name="Nat. Genet.">
        <title>Comparative analysis of the genome sequences of Bordetella pertussis, Bordetella parapertussis and Bordetella bronchiseptica.</title>
        <authorList>
            <person name="Parkhill J."/>
            <person name="Sebaihia M."/>
            <person name="Preston A."/>
            <person name="Murphy L.D."/>
            <person name="Thomson N.R."/>
            <person name="Harris D.E."/>
            <person name="Holden M.T.G."/>
            <person name="Churcher C.M."/>
            <person name="Bentley S.D."/>
            <person name="Mungall K.L."/>
            <person name="Cerdeno-Tarraga A.-M."/>
            <person name="Temple L."/>
            <person name="James K.D."/>
            <person name="Harris B."/>
            <person name="Quail M.A."/>
            <person name="Achtman M."/>
            <person name="Atkin R."/>
            <person name="Baker S."/>
            <person name="Basham D."/>
            <person name="Bason N."/>
            <person name="Cherevach I."/>
            <person name="Chillingworth T."/>
            <person name="Collins M."/>
            <person name="Cronin A."/>
            <person name="Davis P."/>
            <person name="Doggett J."/>
            <person name="Feltwell T."/>
            <person name="Goble A."/>
            <person name="Hamlin N."/>
            <person name="Hauser H."/>
            <person name="Holroyd S."/>
            <person name="Jagels K."/>
            <person name="Leather S."/>
            <person name="Moule S."/>
            <person name="Norberczak H."/>
            <person name="O'Neil S."/>
            <person name="Ormond D."/>
            <person name="Price C."/>
            <person name="Rabbinowitsch E."/>
            <person name="Rutter S."/>
            <person name="Sanders M."/>
            <person name="Saunders D."/>
            <person name="Seeger K."/>
            <person name="Sharp S."/>
            <person name="Simmonds M."/>
            <person name="Skelton J."/>
            <person name="Squares R."/>
            <person name="Squares S."/>
            <person name="Stevens K."/>
            <person name="Unwin L."/>
            <person name="Whitehead S."/>
            <person name="Barrell B.G."/>
            <person name="Maskell D.J."/>
        </authorList>
    </citation>
    <scope>NUCLEOTIDE SEQUENCE [LARGE SCALE GENOMIC DNA]</scope>
    <source>
        <strain>12822 / ATCC BAA-587 / NCTC 13253</strain>
    </source>
</reference>
<proteinExistence type="inferred from homology"/>
<comment type="function">
    <text evidence="1">Produces ATP from ADP in the presence of a proton gradient across the membrane.</text>
</comment>
<comment type="subunit">
    <text>F-type ATPases have 2 components, CF(1) - the catalytic core - and CF(0) - the membrane proton channel. CF(1) has five subunits: alpha(3), beta(3), gamma(1), delta(1), epsilon(1). CF(0) has three main subunits: a, b and c.</text>
</comment>
<comment type="subcellular location">
    <subcellularLocation>
        <location evidence="1">Cell inner membrane</location>
        <topology evidence="1">Peripheral membrane protein</topology>
    </subcellularLocation>
</comment>
<comment type="similarity">
    <text evidence="1">Belongs to the ATPase epsilon chain family.</text>
</comment>
<organism>
    <name type="scientific">Bordetella parapertussis (strain 12822 / ATCC BAA-587 / NCTC 13253)</name>
    <dbReference type="NCBI Taxonomy" id="257311"/>
    <lineage>
        <taxon>Bacteria</taxon>
        <taxon>Pseudomonadati</taxon>
        <taxon>Pseudomonadota</taxon>
        <taxon>Betaproteobacteria</taxon>
        <taxon>Burkholderiales</taxon>
        <taxon>Alcaligenaceae</taxon>
        <taxon>Bordetella</taxon>
    </lineage>
</organism>
<evidence type="ECO:0000255" key="1">
    <source>
        <dbReference type="HAMAP-Rule" id="MF_00530"/>
    </source>
</evidence>
<accession>Q7W3B1</accession>
<feature type="chain" id="PRO_0000188106" description="ATP synthase epsilon chain">
    <location>
        <begin position="1"/>
        <end position="140"/>
    </location>
</feature>
<gene>
    <name evidence="1" type="primary">atpC</name>
    <name type="ordered locus">BPP4134</name>
</gene>
<keyword id="KW-0066">ATP synthesis</keyword>
<keyword id="KW-0997">Cell inner membrane</keyword>
<keyword id="KW-1003">Cell membrane</keyword>
<keyword id="KW-0139">CF(1)</keyword>
<keyword id="KW-0375">Hydrogen ion transport</keyword>
<keyword id="KW-0406">Ion transport</keyword>
<keyword id="KW-0472">Membrane</keyword>
<keyword id="KW-0813">Transport</keyword>
<name>ATPE_BORPA</name>